<accession>B8D1J4</accession>
<protein>
    <recommendedName>
        <fullName evidence="1">UPF0342 protein Hore_03100</fullName>
    </recommendedName>
</protein>
<gene>
    <name type="ordered locus">Hore_03100</name>
</gene>
<comment type="similarity">
    <text evidence="1">Belongs to the UPF0342 family.</text>
</comment>
<dbReference type="EMBL" id="CP001098">
    <property type="protein sequence ID" value="ACL69071.1"/>
    <property type="molecule type" value="Genomic_DNA"/>
</dbReference>
<dbReference type="RefSeq" id="WP_012635259.1">
    <property type="nucleotide sequence ID" value="NC_011899.1"/>
</dbReference>
<dbReference type="SMR" id="B8D1J4"/>
<dbReference type="STRING" id="373903.Hore_03100"/>
<dbReference type="KEGG" id="hor:Hore_03100"/>
<dbReference type="eggNOG" id="COG3679">
    <property type="taxonomic scope" value="Bacteria"/>
</dbReference>
<dbReference type="HOGENOM" id="CLU_140243_2_0_9"/>
<dbReference type="OrthoDB" id="9811402at2"/>
<dbReference type="Proteomes" id="UP000000719">
    <property type="component" value="Chromosome"/>
</dbReference>
<dbReference type="Gene3D" id="1.20.1500.10">
    <property type="entry name" value="YheA/YmcA-like"/>
    <property type="match status" value="1"/>
</dbReference>
<dbReference type="HAMAP" id="MF_01526">
    <property type="entry name" value="UPF0342"/>
    <property type="match status" value="1"/>
</dbReference>
<dbReference type="InterPro" id="IPR010368">
    <property type="entry name" value="Com_YlbF"/>
</dbReference>
<dbReference type="InterPro" id="IPR023378">
    <property type="entry name" value="YheA/YmcA-like_dom_sf"/>
</dbReference>
<dbReference type="Pfam" id="PF06133">
    <property type="entry name" value="Com_YlbF"/>
    <property type="match status" value="1"/>
</dbReference>
<dbReference type="SUPFAM" id="SSF158622">
    <property type="entry name" value="YheA/YmcA-like"/>
    <property type="match status" value="1"/>
</dbReference>
<organism>
    <name type="scientific">Halothermothrix orenii (strain H 168 / OCM 544 / DSM 9562)</name>
    <dbReference type="NCBI Taxonomy" id="373903"/>
    <lineage>
        <taxon>Bacteria</taxon>
        <taxon>Bacillati</taxon>
        <taxon>Bacillota</taxon>
        <taxon>Clostridia</taxon>
        <taxon>Halanaerobiales</taxon>
        <taxon>Halothermotrichaceae</taxon>
        <taxon>Halothermothrix</taxon>
    </lineage>
</organism>
<feature type="chain" id="PRO_1000185140" description="UPF0342 protein Hore_03100">
    <location>
        <begin position="1"/>
        <end position="118"/>
    </location>
</feature>
<reference key="1">
    <citation type="journal article" date="2009" name="PLoS ONE">
        <title>Genome analysis of the anaerobic thermohalophilic bacterium Halothermothrix orenii.</title>
        <authorList>
            <person name="Mavromatis K."/>
            <person name="Ivanova N."/>
            <person name="Anderson I."/>
            <person name="Lykidis A."/>
            <person name="Hooper S.D."/>
            <person name="Sun H."/>
            <person name="Kunin V."/>
            <person name="Lapidus A."/>
            <person name="Hugenholtz P."/>
            <person name="Patel B."/>
            <person name="Kyrpides N.C."/>
        </authorList>
    </citation>
    <scope>NUCLEOTIDE SEQUENCE [LARGE SCALE GENOMIC DNA]</scope>
    <source>
        <strain>H 168 / OCM 544 / DSM 9562</strain>
    </source>
</reference>
<proteinExistence type="inferred from homology"/>
<name>Y3100_HALOH</name>
<evidence type="ECO:0000255" key="1">
    <source>
        <dbReference type="HAMAP-Rule" id="MF_01526"/>
    </source>
</evidence>
<keyword id="KW-1185">Reference proteome</keyword>
<sequence>MALYDLAHQLAREIKNSDEYTRYKELKDKIMSNEATKSMLLDFQKQQINIQSKQINGQTITDEEKEKFENIKELINLNSDIKEYLDAEYRMGVLFNDIQKILFGGLEIGITENEKSTR</sequence>